<proteinExistence type="inferred from homology"/>
<protein>
    <recommendedName>
        <fullName>Protein tailless</fullName>
    </recommendedName>
    <alternativeName>
        <fullName>Nuclear receptor subfamily 2 group E member 2</fullName>
    </alternativeName>
</protein>
<keyword id="KW-0010">Activator</keyword>
<keyword id="KW-0217">Developmental protein</keyword>
<keyword id="KW-0238">DNA-binding</keyword>
<keyword id="KW-0479">Metal-binding</keyword>
<keyword id="KW-0539">Nucleus</keyword>
<keyword id="KW-0675">Receptor</keyword>
<keyword id="KW-1185">Reference proteome</keyword>
<keyword id="KW-0678">Repressor</keyword>
<keyword id="KW-0804">Transcription</keyword>
<keyword id="KW-0805">Transcription regulation</keyword>
<keyword id="KW-0862">Zinc</keyword>
<keyword id="KW-0863">Zinc-finger</keyword>
<dbReference type="EMBL" id="AF019361">
    <property type="protein sequence ID" value="AAB71370.1"/>
    <property type="molecule type" value="Genomic_DNA"/>
</dbReference>
<dbReference type="EMBL" id="CH940650">
    <property type="protein sequence ID" value="EDW67613.1"/>
    <property type="molecule type" value="Genomic_DNA"/>
</dbReference>
<dbReference type="PIR" id="B47265">
    <property type="entry name" value="B47265"/>
</dbReference>
<dbReference type="RefSeq" id="XP_002054093.1">
    <property type="nucleotide sequence ID" value="XM_002054057.4"/>
</dbReference>
<dbReference type="SMR" id="O16845"/>
<dbReference type="FunCoup" id="O16845">
    <property type="interactions" value="94"/>
</dbReference>
<dbReference type="STRING" id="7244.O16845"/>
<dbReference type="EnsemblMetazoa" id="FBtr0240171">
    <property type="protein sequence ID" value="FBpp0238663"/>
    <property type="gene ID" value="FBgn0013145"/>
</dbReference>
<dbReference type="EnsemblMetazoa" id="XM_002054057.3">
    <property type="protein sequence ID" value="XP_002054093.1"/>
    <property type="gene ID" value="LOC6629478"/>
</dbReference>
<dbReference type="GeneID" id="6629478"/>
<dbReference type="KEGG" id="dvi:6629478"/>
<dbReference type="CTD" id="43656"/>
<dbReference type="eggNOG" id="KOG3575">
    <property type="taxonomic scope" value="Eukaryota"/>
</dbReference>
<dbReference type="InParanoid" id="O16845"/>
<dbReference type="OMA" id="IMGMVTR"/>
<dbReference type="OrthoDB" id="10045640at2759"/>
<dbReference type="Proteomes" id="UP000008792">
    <property type="component" value="Unassembled WGS sequence"/>
</dbReference>
<dbReference type="GO" id="GO:0005634">
    <property type="term" value="C:nucleus"/>
    <property type="evidence" value="ECO:0007669"/>
    <property type="project" value="UniProtKB-SubCell"/>
</dbReference>
<dbReference type="GO" id="GO:0000981">
    <property type="term" value="F:DNA-binding transcription factor activity, RNA polymerase II-specific"/>
    <property type="evidence" value="ECO:0007669"/>
    <property type="project" value="EnsemblMetazoa"/>
</dbReference>
<dbReference type="GO" id="GO:0043565">
    <property type="term" value="F:sequence-specific DNA binding"/>
    <property type="evidence" value="ECO:0007669"/>
    <property type="project" value="InterPro"/>
</dbReference>
<dbReference type="GO" id="GO:0001222">
    <property type="term" value="F:transcription corepressor binding"/>
    <property type="evidence" value="ECO:0007669"/>
    <property type="project" value="EnsemblMetazoa"/>
</dbReference>
<dbReference type="GO" id="GO:0008270">
    <property type="term" value="F:zinc ion binding"/>
    <property type="evidence" value="ECO:0007669"/>
    <property type="project" value="UniProtKB-KW"/>
</dbReference>
<dbReference type="GO" id="GO:0045165">
    <property type="term" value="P:cell fate commitment"/>
    <property type="evidence" value="ECO:0007669"/>
    <property type="project" value="EnsemblMetazoa"/>
</dbReference>
<dbReference type="GO" id="GO:0001748">
    <property type="term" value="P:insect visual primordium development"/>
    <property type="evidence" value="ECO:0007669"/>
    <property type="project" value="EnsemblMetazoa"/>
</dbReference>
<dbReference type="GO" id="GO:0002121">
    <property type="term" value="P:inter-male aggressive behavior"/>
    <property type="evidence" value="ECO:0007669"/>
    <property type="project" value="EnsemblMetazoa"/>
</dbReference>
<dbReference type="GO" id="GO:0016319">
    <property type="term" value="P:mushroom body development"/>
    <property type="evidence" value="ECO:0007669"/>
    <property type="project" value="EnsemblMetazoa"/>
</dbReference>
<dbReference type="GO" id="GO:0000122">
    <property type="term" value="P:negative regulation of transcription by RNA polymerase II"/>
    <property type="evidence" value="ECO:0007669"/>
    <property type="project" value="EnsemblMetazoa"/>
</dbReference>
<dbReference type="GO" id="GO:0055057">
    <property type="term" value="P:neuroblast division"/>
    <property type="evidence" value="ECO:0007669"/>
    <property type="project" value="EnsemblMetazoa"/>
</dbReference>
<dbReference type="GO" id="GO:0045944">
    <property type="term" value="P:positive regulation of transcription by RNA polymerase II"/>
    <property type="evidence" value="ECO:0007669"/>
    <property type="project" value="EnsemblMetazoa"/>
</dbReference>
<dbReference type="GO" id="GO:0051726">
    <property type="term" value="P:regulation of cell cycle"/>
    <property type="evidence" value="ECO:0007669"/>
    <property type="project" value="EnsemblMetazoa"/>
</dbReference>
<dbReference type="GO" id="GO:0035271">
    <property type="term" value="P:ring gland development"/>
    <property type="evidence" value="ECO:0007669"/>
    <property type="project" value="EnsemblMetazoa"/>
</dbReference>
<dbReference type="GO" id="GO:0023061">
    <property type="term" value="P:signal release"/>
    <property type="evidence" value="ECO:0007669"/>
    <property type="project" value="EnsemblMetazoa"/>
</dbReference>
<dbReference type="CDD" id="cd07163">
    <property type="entry name" value="NR_DBD_TLX"/>
    <property type="match status" value="1"/>
</dbReference>
<dbReference type="FunFam" id="1.10.565.10:FF:000051">
    <property type="entry name" value="Blast:Protein tailless"/>
    <property type="match status" value="1"/>
</dbReference>
<dbReference type="FunFam" id="3.30.50.10:FF:000019">
    <property type="entry name" value="Nuclear receptor subfamily 2 group E member"/>
    <property type="match status" value="1"/>
</dbReference>
<dbReference type="Gene3D" id="3.30.50.10">
    <property type="entry name" value="Erythroid Transcription Factor GATA-1, subunit A"/>
    <property type="match status" value="1"/>
</dbReference>
<dbReference type="Gene3D" id="1.10.565.10">
    <property type="entry name" value="Retinoid X Receptor"/>
    <property type="match status" value="1"/>
</dbReference>
<dbReference type="InterPro" id="IPR035500">
    <property type="entry name" value="NHR-like_dom_sf"/>
</dbReference>
<dbReference type="InterPro" id="IPR000536">
    <property type="entry name" value="Nucl_hrmn_rcpt_lig-bd"/>
</dbReference>
<dbReference type="InterPro" id="IPR050274">
    <property type="entry name" value="Nuclear_hormone_rcpt_NR2"/>
</dbReference>
<dbReference type="InterPro" id="IPR001723">
    <property type="entry name" value="Nuclear_hrmn_rcpt"/>
</dbReference>
<dbReference type="InterPro" id="IPR001628">
    <property type="entry name" value="Znf_hrmn_rcpt"/>
</dbReference>
<dbReference type="InterPro" id="IPR013088">
    <property type="entry name" value="Znf_NHR/GATA"/>
</dbReference>
<dbReference type="PANTHER" id="PTHR24083">
    <property type="entry name" value="NUCLEAR HORMONE RECEPTOR"/>
    <property type="match status" value="1"/>
</dbReference>
<dbReference type="Pfam" id="PF00104">
    <property type="entry name" value="Hormone_recep"/>
    <property type="match status" value="1"/>
</dbReference>
<dbReference type="Pfam" id="PF00105">
    <property type="entry name" value="zf-C4"/>
    <property type="match status" value="1"/>
</dbReference>
<dbReference type="PRINTS" id="PR00398">
    <property type="entry name" value="STRDHORMONER"/>
</dbReference>
<dbReference type="PRINTS" id="PR00047">
    <property type="entry name" value="STROIDFINGER"/>
</dbReference>
<dbReference type="SMART" id="SM00430">
    <property type="entry name" value="HOLI"/>
    <property type="match status" value="1"/>
</dbReference>
<dbReference type="SMART" id="SM00399">
    <property type="entry name" value="ZnF_C4"/>
    <property type="match status" value="1"/>
</dbReference>
<dbReference type="SUPFAM" id="SSF57716">
    <property type="entry name" value="Glucocorticoid receptor-like (DNA-binding domain)"/>
    <property type="match status" value="1"/>
</dbReference>
<dbReference type="SUPFAM" id="SSF48508">
    <property type="entry name" value="Nuclear receptor ligand-binding domain"/>
    <property type="match status" value="1"/>
</dbReference>
<dbReference type="PROSITE" id="PS51843">
    <property type="entry name" value="NR_LBD"/>
    <property type="match status" value="1"/>
</dbReference>
<dbReference type="PROSITE" id="PS00031">
    <property type="entry name" value="NUCLEAR_REC_DBD_1"/>
    <property type="match status" value="1"/>
</dbReference>
<dbReference type="PROSITE" id="PS51030">
    <property type="entry name" value="NUCLEAR_REC_DBD_2"/>
    <property type="match status" value="1"/>
</dbReference>
<name>TLL_DROVI</name>
<accession>O16845</accession>
<accession>B4LW79</accession>
<gene>
    <name type="primary">tll</name>
    <name type="synonym">NR2E2</name>
</gene>
<sequence>MQSSEGSPDMMDQKYNSVRLSPAASSRILYHVPCKVCRDHSSGKHYGIYACDGCAGFFKRSIRRSRQYVCKSQKQGLCVVDKTHRNQCRACRLRKCFEVGMNKDAVQHERGPRNSTLRRHMAMYKDAMMGAAEMPQIPPEILMNTAALTGFPGLPMPMPGVQRSHHHAALSAAFQPPPSAAVLDLSVPRVPHHPVHQGHHGFFSPTAAYMNALATRALPPTPPLMAAEHIKETAAEHLFKNVNWIKSVRAFTELPMPDQLLLLEESWKEFFILAMAQYLMPMNFAQLLFVYESENANREIVTIVAREVHAFQDVLNQLCHLNIDSTEYECLRAISLFRKSPPAASSTEDLANSSILTGSGSPNSSASAESRGLLESSKVAAMHNDARNALHNYISRTHPNQPLRFQTLLGVVTLMHKVSSFTIEELFFRKTIGDITIVRLISDMYSQRKI</sequence>
<evidence type="ECO:0000250" key="1"/>
<evidence type="ECO:0000255" key="2">
    <source>
        <dbReference type="PROSITE-ProRule" id="PRU00407"/>
    </source>
</evidence>
<evidence type="ECO:0000255" key="3">
    <source>
        <dbReference type="PROSITE-ProRule" id="PRU01189"/>
    </source>
</evidence>
<evidence type="ECO:0000305" key="4"/>
<reference key="1">
    <citation type="journal article" date="1997" name="Development">
        <title>Complex regulatory region mediating tailless expression in early embryonic patterning and brain development.</title>
        <authorList>
            <person name="Rudolph K.M."/>
            <person name="Liaw G.-J."/>
            <person name="Daniel A."/>
            <person name="Green P."/>
            <person name="Courey A.J."/>
            <person name="Hartenstein V."/>
            <person name="Lengyel J.A."/>
        </authorList>
    </citation>
    <scope>NUCLEOTIDE SEQUENCE [GENOMIC DNA]</scope>
</reference>
<reference key="2">
    <citation type="journal article" date="2007" name="Nature">
        <title>Evolution of genes and genomes on the Drosophila phylogeny.</title>
        <authorList>
            <consortium name="Drosophila 12 genomes consortium"/>
        </authorList>
    </citation>
    <scope>NUCLEOTIDE SEQUENCE [LARGE SCALE GENOMIC DNA]</scope>
    <source>
        <strain>Tucson 15010-1051.87</strain>
    </source>
</reference>
<comment type="function">
    <text evidence="1">Orphan receptor that binds DNA as a monomer to hormone response elements (HRE) containing an extended core motif half-site sequence 5'-AAGTCA-3' in which the 5' flanking nucleotides participate in determining receptor specificity. This receptor binds to the consensus sequence [AG][AG]AAGTCAA. Plays a key role in the establishment of non-metameric domains at the anterior and posterior poles of the embryo. It may also play a role in the nervous system. The maternal terminal pathway activates the tll gene in the termini; TLL activity then represses segmentation and activates terminal-specific genes in these domains. Involved in the regulation of early eye development. In the embryonic visual system anlage drives cells to optic lobe as opposed to Bolwig's organ fate (By similarity).</text>
</comment>
<comment type="subunit">
    <text evidence="1">Monomer.</text>
</comment>
<comment type="subcellular location">
    <subcellularLocation>
        <location evidence="2">Nucleus</location>
    </subcellularLocation>
</comment>
<comment type="similarity">
    <text evidence="4">Belongs to the nuclear hormone receptor family. NR2 subfamily.</text>
</comment>
<organism>
    <name type="scientific">Drosophila virilis</name>
    <name type="common">Fruit fly</name>
    <dbReference type="NCBI Taxonomy" id="7244"/>
    <lineage>
        <taxon>Eukaryota</taxon>
        <taxon>Metazoa</taxon>
        <taxon>Ecdysozoa</taxon>
        <taxon>Arthropoda</taxon>
        <taxon>Hexapoda</taxon>
        <taxon>Insecta</taxon>
        <taxon>Pterygota</taxon>
        <taxon>Neoptera</taxon>
        <taxon>Endopterygota</taxon>
        <taxon>Diptera</taxon>
        <taxon>Brachycera</taxon>
        <taxon>Muscomorpha</taxon>
        <taxon>Ephydroidea</taxon>
        <taxon>Drosophilidae</taxon>
        <taxon>Drosophila</taxon>
    </lineage>
</organism>
<feature type="chain" id="PRO_0000053598" description="Protein tailless">
    <location>
        <begin position="1"/>
        <end position="450"/>
    </location>
</feature>
<feature type="domain" description="NR LBD" evidence="3">
    <location>
        <begin position="187"/>
        <end position="448"/>
    </location>
</feature>
<feature type="DNA-binding region" description="Nuclear receptor" evidence="2">
    <location>
        <begin position="31"/>
        <end position="108"/>
    </location>
</feature>
<feature type="zinc finger region" description="NR C4-type" evidence="2">
    <location>
        <begin position="34"/>
        <end position="54"/>
    </location>
</feature>
<feature type="zinc finger region" description="NR C4-type" evidence="2">
    <location>
        <begin position="70"/>
        <end position="96"/>
    </location>
</feature>
<feature type="sequence conflict" description="In Ref. 1; AAB71370." evidence="4" ref="1">
    <original>DVLNQ</original>
    <variation>AVPNR</variation>
    <location>
        <begin position="313"/>
        <end position="317"/>
    </location>
</feature>